<comment type="function">
    <text evidence="1">Promotes RNA polymerase assembly. Latches the N- and C-terminal regions of the beta' subunit thereby facilitating its interaction with the beta and alpha subunits.</text>
</comment>
<comment type="catalytic activity">
    <reaction evidence="1">
        <text>RNA(n) + a ribonucleoside 5'-triphosphate = RNA(n+1) + diphosphate</text>
        <dbReference type="Rhea" id="RHEA:21248"/>
        <dbReference type="Rhea" id="RHEA-COMP:14527"/>
        <dbReference type="Rhea" id="RHEA-COMP:17342"/>
        <dbReference type="ChEBI" id="CHEBI:33019"/>
        <dbReference type="ChEBI" id="CHEBI:61557"/>
        <dbReference type="ChEBI" id="CHEBI:140395"/>
        <dbReference type="EC" id="2.7.7.6"/>
    </reaction>
</comment>
<comment type="subunit">
    <text evidence="1">The RNAP catalytic core consists of 2 alpha, 1 beta, 1 beta' and 1 omega subunit. When a sigma factor is associated with the core the holoenzyme is formed, which can initiate transcription.</text>
</comment>
<comment type="similarity">
    <text evidence="1">Belongs to the RNA polymerase subunit omega family.</text>
</comment>
<sequence>MEKIVKFDLKYDELLKKIPYKYAIPVVVAKRAEAIREYARPFVITDDENYVSIAFMELSLNYIRIKNEEILKALIPKVK</sequence>
<reference key="1">
    <citation type="journal article" date="2011" name="J. Bacteriol.">
        <title>Genome sequence of Thermotoga sp. strain RQ2, a hyperthermophilic bacterium isolated from a geothermally heated region of the seafloor near Ribeira Quente, the Azores.</title>
        <authorList>
            <person name="Swithers K.S."/>
            <person name="DiPippo J.L."/>
            <person name="Bruce D.C."/>
            <person name="Detter C."/>
            <person name="Tapia R."/>
            <person name="Han S."/>
            <person name="Saunders E."/>
            <person name="Goodwin L.A."/>
            <person name="Han J."/>
            <person name="Woyke T."/>
            <person name="Pitluck S."/>
            <person name="Pennacchio L."/>
            <person name="Nolan M."/>
            <person name="Mikhailova N."/>
            <person name="Lykidis A."/>
            <person name="Land M.L."/>
            <person name="Brettin T."/>
            <person name="Stetter K.O."/>
            <person name="Nelson K.E."/>
            <person name="Gogarten J.P."/>
            <person name="Noll K.M."/>
        </authorList>
    </citation>
    <scope>NUCLEOTIDE SEQUENCE [LARGE SCALE GENOMIC DNA]</scope>
    <source>
        <strain>RQ2</strain>
    </source>
</reference>
<name>RPOZ_THESQ</name>
<gene>
    <name evidence="1" type="primary">rpoZ</name>
    <name type="ordered locus">TRQ2_1146</name>
</gene>
<protein>
    <recommendedName>
        <fullName evidence="1">DNA-directed RNA polymerase subunit omega</fullName>
        <shortName evidence="1">RNAP omega subunit</shortName>
        <ecNumber evidence="1">2.7.7.6</ecNumber>
    </recommendedName>
    <alternativeName>
        <fullName evidence="1">RNA polymerase omega subunit</fullName>
    </alternativeName>
    <alternativeName>
        <fullName evidence="1">Transcriptase subunit omega</fullName>
    </alternativeName>
</protein>
<keyword id="KW-0240">DNA-directed RNA polymerase</keyword>
<keyword id="KW-0548">Nucleotidyltransferase</keyword>
<keyword id="KW-0804">Transcription</keyword>
<keyword id="KW-0808">Transferase</keyword>
<organism>
    <name type="scientific">Thermotoga sp. (strain RQ2)</name>
    <dbReference type="NCBI Taxonomy" id="126740"/>
    <lineage>
        <taxon>Bacteria</taxon>
        <taxon>Thermotogati</taxon>
        <taxon>Thermotogota</taxon>
        <taxon>Thermotogae</taxon>
        <taxon>Thermotogales</taxon>
        <taxon>Thermotogaceae</taxon>
        <taxon>Thermotoga</taxon>
    </lineage>
</organism>
<evidence type="ECO:0000255" key="1">
    <source>
        <dbReference type="HAMAP-Rule" id="MF_00366"/>
    </source>
</evidence>
<accession>B1LAZ3</accession>
<dbReference type="EC" id="2.7.7.6" evidence="1"/>
<dbReference type="EMBL" id="CP000969">
    <property type="protein sequence ID" value="ACB09491.1"/>
    <property type="molecule type" value="Genomic_DNA"/>
</dbReference>
<dbReference type="RefSeq" id="WP_004082204.1">
    <property type="nucleotide sequence ID" value="NC_010483.1"/>
</dbReference>
<dbReference type="SMR" id="B1LAZ3"/>
<dbReference type="KEGG" id="trq:TRQ2_1146"/>
<dbReference type="HOGENOM" id="CLU_125406_4_0_0"/>
<dbReference type="Proteomes" id="UP000001687">
    <property type="component" value="Chromosome"/>
</dbReference>
<dbReference type="GO" id="GO:0000428">
    <property type="term" value="C:DNA-directed RNA polymerase complex"/>
    <property type="evidence" value="ECO:0007669"/>
    <property type="project" value="UniProtKB-KW"/>
</dbReference>
<dbReference type="GO" id="GO:0003677">
    <property type="term" value="F:DNA binding"/>
    <property type="evidence" value="ECO:0007669"/>
    <property type="project" value="UniProtKB-UniRule"/>
</dbReference>
<dbReference type="GO" id="GO:0003899">
    <property type="term" value="F:DNA-directed RNA polymerase activity"/>
    <property type="evidence" value="ECO:0007669"/>
    <property type="project" value="UniProtKB-UniRule"/>
</dbReference>
<dbReference type="GO" id="GO:0006351">
    <property type="term" value="P:DNA-templated transcription"/>
    <property type="evidence" value="ECO:0007669"/>
    <property type="project" value="UniProtKB-UniRule"/>
</dbReference>
<dbReference type="Gene3D" id="3.90.940.10">
    <property type="match status" value="1"/>
</dbReference>
<dbReference type="HAMAP" id="MF_00366">
    <property type="entry name" value="RNApol_bact_RpoZ"/>
    <property type="match status" value="1"/>
</dbReference>
<dbReference type="InterPro" id="IPR003716">
    <property type="entry name" value="DNA-dir_RNA_pol_omega"/>
</dbReference>
<dbReference type="InterPro" id="IPR006110">
    <property type="entry name" value="Pol_omega/Rpo6/RPB6"/>
</dbReference>
<dbReference type="InterPro" id="IPR036161">
    <property type="entry name" value="RPB6/omega-like_sf"/>
</dbReference>
<dbReference type="Pfam" id="PF01192">
    <property type="entry name" value="RNA_pol_Rpb6"/>
    <property type="match status" value="1"/>
</dbReference>
<dbReference type="SMART" id="SM01409">
    <property type="entry name" value="RNA_pol_Rpb6"/>
    <property type="match status" value="1"/>
</dbReference>
<dbReference type="SUPFAM" id="SSF63562">
    <property type="entry name" value="RPB6/omega subunit-like"/>
    <property type="match status" value="1"/>
</dbReference>
<feature type="chain" id="PRO_1000121286" description="DNA-directed RNA polymerase subunit omega">
    <location>
        <begin position="1"/>
        <end position="79"/>
    </location>
</feature>
<proteinExistence type="inferred from homology"/>